<name>RRF_RHOPT</name>
<gene>
    <name evidence="1" type="primary">frr</name>
    <name type="ordered locus">Rpal_3265</name>
</gene>
<protein>
    <recommendedName>
        <fullName evidence="1">Ribosome-recycling factor</fullName>
        <shortName evidence="1">RRF</shortName>
    </recommendedName>
    <alternativeName>
        <fullName evidence="1">Ribosome-releasing factor</fullName>
    </alternativeName>
</protein>
<organism>
    <name type="scientific">Rhodopseudomonas palustris (strain TIE-1)</name>
    <dbReference type="NCBI Taxonomy" id="395960"/>
    <lineage>
        <taxon>Bacteria</taxon>
        <taxon>Pseudomonadati</taxon>
        <taxon>Pseudomonadota</taxon>
        <taxon>Alphaproteobacteria</taxon>
        <taxon>Hyphomicrobiales</taxon>
        <taxon>Nitrobacteraceae</taxon>
        <taxon>Rhodopseudomonas</taxon>
    </lineage>
</organism>
<sequence length="186" mass="20764">MSDKFDVNELKRRMQGAAQSLKHELGGLRTGRASASMLEPVQVDAYGSHMPLNQVATVSVPEPRLISVQVWDKSMVKAVEKGIVDSNLGLSPATEGQVIRLRIPELNEERRKELVKVAHKYAEAARVAVRHVRRDGLDTIKKLEKAHEISEDDQKRLDQEVQKATDAAIAEIDQLLANKEKEILTV</sequence>
<feature type="chain" id="PRO_1000090777" description="Ribosome-recycling factor">
    <location>
        <begin position="1"/>
        <end position="186"/>
    </location>
</feature>
<proteinExistence type="inferred from homology"/>
<keyword id="KW-0963">Cytoplasm</keyword>
<keyword id="KW-0648">Protein biosynthesis</keyword>
<evidence type="ECO:0000255" key="1">
    <source>
        <dbReference type="HAMAP-Rule" id="MF_00040"/>
    </source>
</evidence>
<comment type="function">
    <text evidence="1">Responsible for the release of ribosomes from messenger RNA at the termination of protein biosynthesis. May increase the efficiency of translation by recycling ribosomes from one round of translation to another.</text>
</comment>
<comment type="subcellular location">
    <subcellularLocation>
        <location evidence="1">Cytoplasm</location>
    </subcellularLocation>
</comment>
<comment type="similarity">
    <text evidence="1">Belongs to the RRF family.</text>
</comment>
<accession>B3Q7K1</accession>
<dbReference type="EMBL" id="CP001096">
    <property type="protein sequence ID" value="ACF01767.1"/>
    <property type="molecule type" value="Genomic_DNA"/>
</dbReference>
<dbReference type="RefSeq" id="WP_011158468.1">
    <property type="nucleotide sequence ID" value="NC_011004.1"/>
</dbReference>
<dbReference type="SMR" id="B3Q7K1"/>
<dbReference type="GeneID" id="66894001"/>
<dbReference type="KEGG" id="rpt:Rpal_3265"/>
<dbReference type="HOGENOM" id="CLU_073981_2_0_5"/>
<dbReference type="OrthoDB" id="9804006at2"/>
<dbReference type="Proteomes" id="UP000001725">
    <property type="component" value="Chromosome"/>
</dbReference>
<dbReference type="GO" id="GO:0005829">
    <property type="term" value="C:cytosol"/>
    <property type="evidence" value="ECO:0007669"/>
    <property type="project" value="GOC"/>
</dbReference>
<dbReference type="GO" id="GO:0043023">
    <property type="term" value="F:ribosomal large subunit binding"/>
    <property type="evidence" value="ECO:0007669"/>
    <property type="project" value="TreeGrafter"/>
</dbReference>
<dbReference type="GO" id="GO:0002184">
    <property type="term" value="P:cytoplasmic translational termination"/>
    <property type="evidence" value="ECO:0007669"/>
    <property type="project" value="TreeGrafter"/>
</dbReference>
<dbReference type="CDD" id="cd00520">
    <property type="entry name" value="RRF"/>
    <property type="match status" value="1"/>
</dbReference>
<dbReference type="FunFam" id="1.10.132.20:FF:000001">
    <property type="entry name" value="Ribosome-recycling factor"/>
    <property type="match status" value="1"/>
</dbReference>
<dbReference type="FunFam" id="3.30.1360.40:FF:000001">
    <property type="entry name" value="Ribosome-recycling factor"/>
    <property type="match status" value="1"/>
</dbReference>
<dbReference type="Gene3D" id="3.30.1360.40">
    <property type="match status" value="1"/>
</dbReference>
<dbReference type="Gene3D" id="1.10.132.20">
    <property type="entry name" value="Ribosome-recycling factor"/>
    <property type="match status" value="1"/>
</dbReference>
<dbReference type="HAMAP" id="MF_00040">
    <property type="entry name" value="RRF"/>
    <property type="match status" value="1"/>
</dbReference>
<dbReference type="InterPro" id="IPR002661">
    <property type="entry name" value="Ribosome_recyc_fac"/>
</dbReference>
<dbReference type="InterPro" id="IPR023584">
    <property type="entry name" value="Ribosome_recyc_fac_dom"/>
</dbReference>
<dbReference type="InterPro" id="IPR036191">
    <property type="entry name" value="RRF_sf"/>
</dbReference>
<dbReference type="NCBIfam" id="TIGR00496">
    <property type="entry name" value="frr"/>
    <property type="match status" value="1"/>
</dbReference>
<dbReference type="PANTHER" id="PTHR20982:SF3">
    <property type="entry name" value="MITOCHONDRIAL RIBOSOME RECYCLING FACTOR PSEUDO 1"/>
    <property type="match status" value="1"/>
</dbReference>
<dbReference type="PANTHER" id="PTHR20982">
    <property type="entry name" value="RIBOSOME RECYCLING FACTOR"/>
    <property type="match status" value="1"/>
</dbReference>
<dbReference type="Pfam" id="PF01765">
    <property type="entry name" value="RRF"/>
    <property type="match status" value="1"/>
</dbReference>
<dbReference type="SUPFAM" id="SSF55194">
    <property type="entry name" value="Ribosome recycling factor, RRF"/>
    <property type="match status" value="1"/>
</dbReference>
<reference key="1">
    <citation type="submission" date="2008-05" db="EMBL/GenBank/DDBJ databases">
        <title>Complete sequence of Rhodopseudomonas palustris TIE-1.</title>
        <authorList>
            <consortium name="US DOE Joint Genome Institute"/>
            <person name="Lucas S."/>
            <person name="Copeland A."/>
            <person name="Lapidus A."/>
            <person name="Glavina del Rio T."/>
            <person name="Dalin E."/>
            <person name="Tice H."/>
            <person name="Pitluck S."/>
            <person name="Chain P."/>
            <person name="Malfatti S."/>
            <person name="Shin M."/>
            <person name="Vergez L."/>
            <person name="Lang D."/>
            <person name="Schmutz J."/>
            <person name="Larimer F."/>
            <person name="Land M."/>
            <person name="Hauser L."/>
            <person name="Kyrpides N."/>
            <person name="Mikhailova N."/>
            <person name="Emerson D."/>
            <person name="Newman D.K."/>
            <person name="Roden E."/>
            <person name="Richardson P."/>
        </authorList>
    </citation>
    <scope>NUCLEOTIDE SEQUENCE [LARGE SCALE GENOMIC DNA]</scope>
    <source>
        <strain>TIE-1</strain>
    </source>
</reference>